<dbReference type="EMBL" id="BA000023">
    <property type="protein sequence ID" value="BAB65400.1"/>
    <property type="molecule type" value="Genomic_DNA"/>
</dbReference>
<dbReference type="RefSeq" id="WP_010978383.1">
    <property type="nucleotide sequence ID" value="NC_003106.2"/>
</dbReference>
<dbReference type="SMR" id="Q975K0"/>
<dbReference type="STRING" id="273063.STK_04140"/>
<dbReference type="KEGG" id="sto:STK_04140"/>
<dbReference type="PATRIC" id="fig|273063.9.peg.480"/>
<dbReference type="eggNOG" id="arCOG04087">
    <property type="taxonomic scope" value="Archaea"/>
</dbReference>
<dbReference type="OrthoDB" id="38155at2157"/>
<dbReference type="Proteomes" id="UP000001015">
    <property type="component" value="Chromosome"/>
</dbReference>
<dbReference type="GO" id="GO:0022627">
    <property type="term" value="C:cytosolic small ribosomal subunit"/>
    <property type="evidence" value="ECO:0007669"/>
    <property type="project" value="TreeGrafter"/>
</dbReference>
<dbReference type="GO" id="GO:0019843">
    <property type="term" value="F:rRNA binding"/>
    <property type="evidence" value="ECO:0007669"/>
    <property type="project" value="UniProtKB-UniRule"/>
</dbReference>
<dbReference type="GO" id="GO:0003735">
    <property type="term" value="F:structural constituent of ribosome"/>
    <property type="evidence" value="ECO:0007669"/>
    <property type="project" value="InterPro"/>
</dbReference>
<dbReference type="GO" id="GO:0006412">
    <property type="term" value="P:translation"/>
    <property type="evidence" value="ECO:0007669"/>
    <property type="project" value="UniProtKB-UniRule"/>
</dbReference>
<dbReference type="FunFam" id="3.30.160.20:FF:000002">
    <property type="entry name" value="40S ribosomal protein S2"/>
    <property type="match status" value="1"/>
</dbReference>
<dbReference type="FunFam" id="3.30.230.10:FF:000004">
    <property type="entry name" value="40S ribosomal protein S2"/>
    <property type="match status" value="1"/>
</dbReference>
<dbReference type="Gene3D" id="3.30.160.20">
    <property type="match status" value="1"/>
</dbReference>
<dbReference type="Gene3D" id="3.30.230.10">
    <property type="match status" value="1"/>
</dbReference>
<dbReference type="HAMAP" id="MF_01307_A">
    <property type="entry name" value="Ribosomal_uS5_A"/>
    <property type="match status" value="1"/>
</dbReference>
<dbReference type="InterPro" id="IPR020568">
    <property type="entry name" value="Ribosomal_Su5_D2-typ_SF"/>
</dbReference>
<dbReference type="InterPro" id="IPR000851">
    <property type="entry name" value="Ribosomal_uS5"/>
</dbReference>
<dbReference type="InterPro" id="IPR047866">
    <property type="entry name" value="Ribosomal_uS5_arc"/>
</dbReference>
<dbReference type="InterPro" id="IPR005324">
    <property type="entry name" value="Ribosomal_uS5_C"/>
</dbReference>
<dbReference type="InterPro" id="IPR005711">
    <property type="entry name" value="Ribosomal_uS5_euk/arc"/>
</dbReference>
<dbReference type="InterPro" id="IPR013810">
    <property type="entry name" value="Ribosomal_uS5_N"/>
</dbReference>
<dbReference type="InterPro" id="IPR018192">
    <property type="entry name" value="Ribosomal_uS5_N_CS"/>
</dbReference>
<dbReference type="InterPro" id="IPR014721">
    <property type="entry name" value="Ribsml_uS5_D2-typ_fold_subgr"/>
</dbReference>
<dbReference type="NCBIfam" id="NF003125">
    <property type="entry name" value="PRK04044.1"/>
    <property type="match status" value="1"/>
</dbReference>
<dbReference type="NCBIfam" id="TIGR01020">
    <property type="entry name" value="uS5_euk_arch"/>
    <property type="match status" value="1"/>
</dbReference>
<dbReference type="PANTHER" id="PTHR13718:SF4">
    <property type="entry name" value="40S RIBOSOMAL PROTEIN S2"/>
    <property type="match status" value="1"/>
</dbReference>
<dbReference type="PANTHER" id="PTHR13718">
    <property type="entry name" value="RIBOSOMAL S SUBUNIT"/>
    <property type="match status" value="1"/>
</dbReference>
<dbReference type="Pfam" id="PF00333">
    <property type="entry name" value="Ribosomal_S5"/>
    <property type="match status" value="1"/>
</dbReference>
<dbReference type="Pfam" id="PF03719">
    <property type="entry name" value="Ribosomal_S5_C"/>
    <property type="match status" value="1"/>
</dbReference>
<dbReference type="SUPFAM" id="SSF54768">
    <property type="entry name" value="dsRNA-binding domain-like"/>
    <property type="match status" value="1"/>
</dbReference>
<dbReference type="SUPFAM" id="SSF54211">
    <property type="entry name" value="Ribosomal protein S5 domain 2-like"/>
    <property type="match status" value="1"/>
</dbReference>
<dbReference type="PROSITE" id="PS00585">
    <property type="entry name" value="RIBOSOMAL_S5"/>
    <property type="match status" value="1"/>
</dbReference>
<dbReference type="PROSITE" id="PS50881">
    <property type="entry name" value="S5_DSRBD"/>
    <property type="match status" value="1"/>
</dbReference>
<organism>
    <name type="scientific">Sulfurisphaera tokodaii (strain DSM 16993 / JCM 10545 / NBRC 100140 / 7)</name>
    <name type="common">Sulfolobus tokodaii</name>
    <dbReference type="NCBI Taxonomy" id="273063"/>
    <lineage>
        <taxon>Archaea</taxon>
        <taxon>Thermoproteota</taxon>
        <taxon>Thermoprotei</taxon>
        <taxon>Sulfolobales</taxon>
        <taxon>Sulfolobaceae</taxon>
        <taxon>Sulfurisphaera</taxon>
    </lineage>
</organism>
<feature type="chain" id="PRO_0000131662" description="Small ribosomal subunit protein uS5">
    <location>
        <begin position="1"/>
        <end position="214"/>
    </location>
</feature>
<feature type="domain" description="S5 DRBM" evidence="1">
    <location>
        <begin position="54"/>
        <end position="117"/>
    </location>
</feature>
<name>RS5_SULTO</name>
<accession>Q975K0</accession>
<sequence length="214" mass="23899">MAEEVPVINPEEWKPRTKVGQLVKEGKITSMKEIFEKNYPITEPEIVDVLLPKLKYEVMDIKIVQKQTDAGEISKYKVLIVMGNMDGYVSYGTGKAKQLRVAIQKAIKNAKMNIIPVRRGCGSWECTCGEAHSLPFKVYGKAGSVEVLLMPAPKGTGLVVGPALKTLLTYAGIKDAWSLTRGSTYTTENFIKAGYNALYNTYKFVTPVDWMRRK</sequence>
<reference key="1">
    <citation type="journal article" date="2001" name="DNA Res.">
        <title>Complete genome sequence of an aerobic thermoacidophilic Crenarchaeon, Sulfolobus tokodaii strain7.</title>
        <authorList>
            <person name="Kawarabayasi Y."/>
            <person name="Hino Y."/>
            <person name="Horikawa H."/>
            <person name="Jin-no K."/>
            <person name="Takahashi M."/>
            <person name="Sekine M."/>
            <person name="Baba S."/>
            <person name="Ankai A."/>
            <person name="Kosugi H."/>
            <person name="Hosoyama A."/>
            <person name="Fukui S."/>
            <person name="Nagai Y."/>
            <person name="Nishijima K."/>
            <person name="Otsuka R."/>
            <person name="Nakazawa H."/>
            <person name="Takamiya M."/>
            <person name="Kato Y."/>
            <person name="Yoshizawa T."/>
            <person name="Tanaka T."/>
            <person name="Kudoh Y."/>
            <person name="Yamazaki J."/>
            <person name="Kushida N."/>
            <person name="Oguchi A."/>
            <person name="Aoki K."/>
            <person name="Masuda S."/>
            <person name="Yanagii M."/>
            <person name="Nishimura M."/>
            <person name="Yamagishi A."/>
            <person name="Oshima T."/>
            <person name="Kikuchi H."/>
        </authorList>
    </citation>
    <scope>NUCLEOTIDE SEQUENCE [LARGE SCALE GENOMIC DNA]</scope>
    <source>
        <strain>DSM 16993 / JCM 10545 / NBRC 100140 / 7</strain>
    </source>
</reference>
<proteinExistence type="inferred from homology"/>
<gene>
    <name evidence="1" type="primary">rps5</name>
    <name type="ordered locus">STK_04140</name>
</gene>
<keyword id="KW-1185">Reference proteome</keyword>
<keyword id="KW-0687">Ribonucleoprotein</keyword>
<keyword id="KW-0689">Ribosomal protein</keyword>
<keyword id="KW-0694">RNA-binding</keyword>
<keyword id="KW-0699">rRNA-binding</keyword>
<evidence type="ECO:0000255" key="1">
    <source>
        <dbReference type="HAMAP-Rule" id="MF_01307"/>
    </source>
</evidence>
<evidence type="ECO:0000305" key="2"/>
<comment type="function">
    <text evidence="1">With S4 and S12 plays an important role in translational accuracy.</text>
</comment>
<comment type="subunit">
    <text evidence="1">Part of the 30S ribosomal subunit. Contacts protein S4.</text>
</comment>
<comment type="domain">
    <text>The N-terminal domain interacts with the head of the 30S subunit; the C-terminal domain interacts with the body and contacts protein S4. The interaction surface between S4 and S5 is involved in control of translational fidelity.</text>
</comment>
<comment type="similarity">
    <text evidence="1">Belongs to the universal ribosomal protein uS5 family.</text>
</comment>
<protein>
    <recommendedName>
        <fullName evidence="1">Small ribosomal subunit protein uS5</fullName>
    </recommendedName>
    <alternativeName>
        <fullName evidence="2">30S ribosomal protein S5</fullName>
    </alternativeName>
</protein>